<accession>P12700</accession>
<geneLocation type="mitochondrion"/>
<evidence type="ECO:0000250" key="1">
    <source>
        <dbReference type="UniProtKB" id="P00396"/>
    </source>
</evidence>
<evidence type="ECO:0000250" key="2">
    <source>
        <dbReference type="UniProtKB" id="P00401"/>
    </source>
</evidence>
<evidence type="ECO:0000255" key="3"/>
<evidence type="ECO:0000305" key="4"/>
<name>COX1_PARLI</name>
<proteinExistence type="inferred from homology"/>
<protein>
    <recommendedName>
        <fullName>Cytochrome c oxidase subunit 1</fullName>
        <ecNumber>7.1.1.9</ecNumber>
    </recommendedName>
    <alternativeName>
        <fullName>Cytochrome c oxidase polypeptide I</fullName>
    </alternativeName>
</protein>
<reference key="1">
    <citation type="journal article" date="1989" name="J. Biol. Chem.">
        <title>The complete nucleotide sequence, gene organization, and genetic code of the mitochondrial genome of Paracentrotus lividus.</title>
        <authorList>
            <person name="Cantatore P."/>
            <person name="Roberti M."/>
            <person name="Rainaldi G."/>
            <person name="Gadaleta M.N."/>
            <person name="Saccone C."/>
        </authorList>
    </citation>
    <scope>NUCLEOTIDE SEQUENCE [GENOMIC DNA]</scope>
</reference>
<reference key="2">
    <citation type="journal article" date="1987" name="Gene">
        <title>A novel gene order in the Paracentrotus lividus mitochondrial genome.</title>
        <authorList>
            <person name="Cantatore P."/>
            <person name="Roberti M."/>
            <person name="Morisco P."/>
            <person name="Rainaldi G."/>
            <person name="Gadaleta M.N."/>
            <person name="Saccone C."/>
        </authorList>
    </citation>
    <scope>NUCLEOTIDE SEQUENCE [GENOMIC DNA] OF 469-517</scope>
    <source>
        <tissue>Egg</tissue>
    </source>
</reference>
<sequence length="517" mass="57217">MQLSRWLFSTNHKDIGTLYLIFGAWAGMVGTAMSVIIRAELAQPGSLLNDDQIYNVVVTAHALVMIFFMVMPIMIGGFGNWLIPLMIGAPDMAFPRMNNMSFWLIPPSFILLLASAGVESGAGTGWTIYPPLSSNIAHAGGSVDLAIFSLHLAGASSILASINFITTIINMRTPGMSFDRLPLFVWSVFVTAFLLLLSLPVLAGAITMLLTDRNINTTFFDPAGGGDPILFQHLFWFFGHPEVYILILPGFGMISHVIAHYSGKREPFGYLGMVYAMIAIGVLGFLVWAHHMFTVGMDVDTRAYFTAATMIIAVPTGIKVFSWMATLQGSNLQWETPLLWALGFVFLFTLGGLTGIVLANSSIDVVLHDTYYVVAHFHYVLSMGAVFAIFAGFTHWFPLFCGYNLHPLWGKAHFFMMFVGVNLTFFPQHFLGLAGMPRRYSDYPDAYTLWNTVSSIGSTISLVAMLFFIFLIWEAFASQREGVTPEFANASLEWQYNSFPPSHHTFDETPSTVVIVK</sequence>
<gene>
    <name type="primary">COI</name>
</gene>
<keyword id="KW-0106">Calcium</keyword>
<keyword id="KW-0186">Copper</keyword>
<keyword id="KW-0249">Electron transport</keyword>
<keyword id="KW-0349">Heme</keyword>
<keyword id="KW-0408">Iron</keyword>
<keyword id="KW-0460">Magnesium</keyword>
<keyword id="KW-0472">Membrane</keyword>
<keyword id="KW-0479">Metal-binding</keyword>
<keyword id="KW-0496">Mitochondrion</keyword>
<keyword id="KW-0999">Mitochondrion inner membrane</keyword>
<keyword id="KW-0679">Respiratory chain</keyword>
<keyword id="KW-1278">Translocase</keyword>
<keyword id="KW-0812">Transmembrane</keyword>
<keyword id="KW-1133">Transmembrane helix</keyword>
<keyword id="KW-0813">Transport</keyword>
<dbReference type="EC" id="7.1.1.9"/>
<dbReference type="EMBL" id="J04815">
    <property type="protein sequence ID" value="AAA68135.1"/>
    <property type="molecule type" value="Genomic_DNA"/>
</dbReference>
<dbReference type="EMBL" id="M16519">
    <property type="protein sequence ID" value="AAA31989.2"/>
    <property type="molecule type" value="Genomic_DNA"/>
</dbReference>
<dbReference type="PIR" id="C34284">
    <property type="entry name" value="C34284"/>
</dbReference>
<dbReference type="SMR" id="P12700"/>
<dbReference type="CTD" id="4512"/>
<dbReference type="UniPathway" id="UPA00705"/>
<dbReference type="GO" id="GO:0005743">
    <property type="term" value="C:mitochondrial inner membrane"/>
    <property type="evidence" value="ECO:0007669"/>
    <property type="project" value="UniProtKB-SubCell"/>
</dbReference>
<dbReference type="GO" id="GO:0045277">
    <property type="term" value="C:respiratory chain complex IV"/>
    <property type="evidence" value="ECO:0007669"/>
    <property type="project" value="InterPro"/>
</dbReference>
<dbReference type="GO" id="GO:0004129">
    <property type="term" value="F:cytochrome-c oxidase activity"/>
    <property type="evidence" value="ECO:0007669"/>
    <property type="project" value="UniProtKB-EC"/>
</dbReference>
<dbReference type="GO" id="GO:0020037">
    <property type="term" value="F:heme binding"/>
    <property type="evidence" value="ECO:0007669"/>
    <property type="project" value="InterPro"/>
</dbReference>
<dbReference type="GO" id="GO:0046872">
    <property type="term" value="F:metal ion binding"/>
    <property type="evidence" value="ECO:0007669"/>
    <property type="project" value="UniProtKB-KW"/>
</dbReference>
<dbReference type="GO" id="GO:0015990">
    <property type="term" value="P:electron transport coupled proton transport"/>
    <property type="evidence" value="ECO:0007669"/>
    <property type="project" value="TreeGrafter"/>
</dbReference>
<dbReference type="GO" id="GO:0006123">
    <property type="term" value="P:mitochondrial electron transport, cytochrome c to oxygen"/>
    <property type="evidence" value="ECO:0007669"/>
    <property type="project" value="TreeGrafter"/>
</dbReference>
<dbReference type="CDD" id="cd01663">
    <property type="entry name" value="Cyt_c_Oxidase_I"/>
    <property type="match status" value="1"/>
</dbReference>
<dbReference type="FunFam" id="1.20.210.10:FF:000001">
    <property type="entry name" value="Cytochrome c oxidase subunit 1"/>
    <property type="match status" value="1"/>
</dbReference>
<dbReference type="Gene3D" id="1.20.210.10">
    <property type="entry name" value="Cytochrome c oxidase-like, subunit I domain"/>
    <property type="match status" value="1"/>
</dbReference>
<dbReference type="InterPro" id="IPR023616">
    <property type="entry name" value="Cyt_c_oxase-like_su1_dom"/>
</dbReference>
<dbReference type="InterPro" id="IPR036927">
    <property type="entry name" value="Cyt_c_oxase-like_su1_sf"/>
</dbReference>
<dbReference type="InterPro" id="IPR000883">
    <property type="entry name" value="Cyt_C_Oxase_1"/>
</dbReference>
<dbReference type="InterPro" id="IPR023615">
    <property type="entry name" value="Cyt_c_Oxase_su1_BS"/>
</dbReference>
<dbReference type="InterPro" id="IPR033944">
    <property type="entry name" value="Cyt_c_oxase_su1_dom"/>
</dbReference>
<dbReference type="PANTHER" id="PTHR10422">
    <property type="entry name" value="CYTOCHROME C OXIDASE SUBUNIT 1"/>
    <property type="match status" value="1"/>
</dbReference>
<dbReference type="PANTHER" id="PTHR10422:SF18">
    <property type="entry name" value="CYTOCHROME C OXIDASE SUBUNIT 1"/>
    <property type="match status" value="1"/>
</dbReference>
<dbReference type="Pfam" id="PF00115">
    <property type="entry name" value="COX1"/>
    <property type="match status" value="1"/>
</dbReference>
<dbReference type="PRINTS" id="PR01165">
    <property type="entry name" value="CYCOXIDASEI"/>
</dbReference>
<dbReference type="SUPFAM" id="SSF81442">
    <property type="entry name" value="Cytochrome c oxidase subunit I-like"/>
    <property type="match status" value="1"/>
</dbReference>
<dbReference type="PROSITE" id="PS50855">
    <property type="entry name" value="COX1"/>
    <property type="match status" value="1"/>
</dbReference>
<dbReference type="PROSITE" id="PS00077">
    <property type="entry name" value="COX1_CUB"/>
    <property type="match status" value="1"/>
</dbReference>
<comment type="function">
    <text evidence="2">Component of the cytochrome c oxidase, the last enzyme in the mitochondrial electron transport chain which drives oxidative phosphorylation. The respiratory chain contains 3 multisubunit complexes succinate dehydrogenase (complex II, CII), ubiquinol-cytochrome c oxidoreductase (cytochrome b-c1 complex, complex III, CIII) and cytochrome c oxidase (complex IV, CIV), that cooperate to transfer electrons derived from NADH and succinate to molecular oxygen, creating an electrochemical gradient over the inner membrane that drives transmembrane transport and the ATP synthase. Cytochrome c oxidase is the component of the respiratory chain that catalyzes the reduction of oxygen to water. Electrons originating from reduced cytochrome c in the intermembrane space (IMS) are transferred via the dinuclear copper A center (CU(A)) of subunit 2 and heme A of subunit 1 to the active site in subunit 1, a binuclear center (BNC) formed by heme A3 and copper B (CU(B)). The BNC reduces molecular oxygen to 2 water molecules using 4 electrons from cytochrome c in the IMS and 4 protons from the mitochondrial matrix.</text>
</comment>
<comment type="catalytic activity">
    <reaction evidence="2">
        <text>4 Fe(II)-[cytochrome c] + O2 + 8 H(+)(in) = 4 Fe(III)-[cytochrome c] + 2 H2O + 4 H(+)(out)</text>
        <dbReference type="Rhea" id="RHEA:11436"/>
        <dbReference type="Rhea" id="RHEA-COMP:10350"/>
        <dbReference type="Rhea" id="RHEA-COMP:14399"/>
        <dbReference type="ChEBI" id="CHEBI:15377"/>
        <dbReference type="ChEBI" id="CHEBI:15378"/>
        <dbReference type="ChEBI" id="CHEBI:15379"/>
        <dbReference type="ChEBI" id="CHEBI:29033"/>
        <dbReference type="ChEBI" id="CHEBI:29034"/>
        <dbReference type="EC" id="7.1.1.9"/>
    </reaction>
    <physiologicalReaction direction="left-to-right" evidence="2">
        <dbReference type="Rhea" id="RHEA:11437"/>
    </physiologicalReaction>
</comment>
<comment type="cofactor">
    <cofactor evidence="2">
        <name>heme</name>
        <dbReference type="ChEBI" id="CHEBI:30413"/>
    </cofactor>
    <text evidence="2">Binds 2 heme A groups non-covalently per subunit.</text>
</comment>
<comment type="cofactor">
    <cofactor evidence="2">
        <name>Cu cation</name>
        <dbReference type="ChEBI" id="CHEBI:23378"/>
    </cofactor>
    <text evidence="2">Binds a copper B center.</text>
</comment>
<comment type="pathway">
    <text evidence="2">Energy metabolism; oxidative phosphorylation.</text>
</comment>
<comment type="subunit">
    <text evidence="2">Component of the cytochrome c oxidase (complex IV, CIV), a multisubunit enzyme composed of a catalytic core of 3 subunits and several supernumerary subunits. The complex exists as a monomer or a dimer and forms supercomplexes (SCs) in the inner mitochondrial membrane with ubiquinol-cytochrome c oxidoreductase (cytochrome b-c1 complex, complex III, CIII).</text>
</comment>
<comment type="subcellular location">
    <subcellularLocation>
        <location evidence="2">Mitochondrion inner membrane</location>
        <topology evidence="2">Multi-pass membrane protein</topology>
    </subcellularLocation>
</comment>
<comment type="similarity">
    <text evidence="4">Belongs to the heme-copper respiratory oxidase family.</text>
</comment>
<feature type="chain" id="PRO_0000183382" description="Cytochrome c oxidase subunit 1">
    <location>
        <begin position="1"/>
        <end position="517"/>
    </location>
</feature>
<feature type="transmembrane region" description="Helical" evidence="3">
    <location>
        <begin position="17"/>
        <end position="37"/>
    </location>
</feature>
<feature type="transmembrane region" description="Helical" evidence="3">
    <location>
        <begin position="63"/>
        <end position="83"/>
    </location>
</feature>
<feature type="transmembrane region" description="Helical" evidence="3">
    <location>
        <begin position="102"/>
        <end position="122"/>
    </location>
</feature>
<feature type="transmembrane region" description="Helical" evidence="3">
    <location>
        <begin position="145"/>
        <end position="165"/>
    </location>
</feature>
<feature type="transmembrane region" description="Helical" evidence="3">
    <location>
        <begin position="183"/>
        <end position="203"/>
    </location>
</feature>
<feature type="transmembrane region" description="Helical" evidence="3">
    <location>
        <begin position="234"/>
        <end position="254"/>
    </location>
</feature>
<feature type="transmembrane region" description="Helical" evidence="3">
    <location>
        <begin position="268"/>
        <end position="288"/>
    </location>
</feature>
<feature type="transmembrane region" description="Helical" evidence="3">
    <location>
        <begin position="305"/>
        <end position="325"/>
    </location>
</feature>
<feature type="transmembrane region" description="Helical" evidence="3">
    <location>
        <begin position="338"/>
        <end position="358"/>
    </location>
</feature>
<feature type="transmembrane region" description="Helical" evidence="3">
    <location>
        <begin position="380"/>
        <end position="400"/>
    </location>
</feature>
<feature type="transmembrane region" description="Helical" evidence="3">
    <location>
        <begin position="414"/>
        <end position="434"/>
    </location>
</feature>
<feature type="transmembrane region" description="Helical" evidence="3">
    <location>
        <begin position="456"/>
        <end position="476"/>
    </location>
</feature>
<feature type="binding site" evidence="2">
    <location>
        <position position="40"/>
    </location>
    <ligand>
        <name>Ca(2+)</name>
        <dbReference type="ChEBI" id="CHEBI:29108"/>
    </ligand>
</feature>
<feature type="binding site" evidence="2">
    <location>
        <position position="45"/>
    </location>
    <ligand>
        <name>Ca(2+)</name>
        <dbReference type="ChEBI" id="CHEBI:29108"/>
    </ligand>
</feature>
<feature type="binding site" description="axial binding residue" evidence="2">
    <location>
        <position position="61"/>
    </location>
    <ligand>
        <name>Fe(II)-heme a</name>
        <dbReference type="ChEBI" id="CHEBI:61715"/>
        <note>low-spin</note>
    </ligand>
    <ligandPart>
        <name>Fe</name>
        <dbReference type="ChEBI" id="CHEBI:18248"/>
    </ligandPart>
</feature>
<feature type="binding site" evidence="2">
    <location>
        <position position="240"/>
    </location>
    <ligand>
        <name>Cu cation</name>
        <dbReference type="ChEBI" id="CHEBI:23378"/>
        <label>B</label>
    </ligand>
</feature>
<feature type="binding site" evidence="1">
    <location>
        <position position="244"/>
    </location>
    <ligand>
        <name>O2</name>
        <dbReference type="ChEBI" id="CHEBI:15379"/>
    </ligand>
</feature>
<feature type="binding site" evidence="2">
    <location>
        <position position="290"/>
    </location>
    <ligand>
        <name>Cu cation</name>
        <dbReference type="ChEBI" id="CHEBI:23378"/>
        <label>B</label>
    </ligand>
</feature>
<feature type="binding site" evidence="2">
    <location>
        <position position="291"/>
    </location>
    <ligand>
        <name>Cu cation</name>
        <dbReference type="ChEBI" id="CHEBI:23378"/>
        <label>B</label>
    </ligand>
</feature>
<feature type="binding site" evidence="2">
    <location>
        <position position="368"/>
    </location>
    <ligand>
        <name>Mg(2+)</name>
        <dbReference type="ChEBI" id="CHEBI:18420"/>
        <note>ligand shared with subunit 2</note>
    </ligand>
</feature>
<feature type="binding site" evidence="2">
    <location>
        <position position="369"/>
    </location>
    <ligand>
        <name>Mg(2+)</name>
        <dbReference type="ChEBI" id="CHEBI:18420"/>
        <note>ligand shared with subunit 2</note>
    </ligand>
</feature>
<feature type="binding site" description="axial binding residue" evidence="2">
    <location>
        <position position="376"/>
    </location>
    <ligand>
        <name>heme a3</name>
        <dbReference type="ChEBI" id="CHEBI:83282"/>
        <note>high-spin</note>
    </ligand>
    <ligandPart>
        <name>Fe</name>
        <dbReference type="ChEBI" id="CHEBI:18248"/>
    </ligandPart>
</feature>
<feature type="binding site" description="axial binding residue" evidence="2">
    <location>
        <position position="378"/>
    </location>
    <ligand>
        <name>Fe(II)-heme a</name>
        <dbReference type="ChEBI" id="CHEBI:61715"/>
        <note>low-spin</note>
    </ligand>
    <ligandPart>
        <name>Fe</name>
        <dbReference type="ChEBI" id="CHEBI:18248"/>
    </ligandPart>
</feature>
<feature type="cross-link" description="1'-histidyl-3'-tyrosine (His-Tyr)" evidence="2">
    <location>
        <begin position="240"/>
        <end position="244"/>
    </location>
</feature>
<organism>
    <name type="scientific">Paracentrotus lividus</name>
    <name type="common">Common sea urchin</name>
    <dbReference type="NCBI Taxonomy" id="7656"/>
    <lineage>
        <taxon>Eukaryota</taxon>
        <taxon>Metazoa</taxon>
        <taxon>Echinodermata</taxon>
        <taxon>Eleutherozoa</taxon>
        <taxon>Echinozoa</taxon>
        <taxon>Echinoidea</taxon>
        <taxon>Euechinoidea</taxon>
        <taxon>Echinacea</taxon>
        <taxon>Camarodonta</taxon>
        <taxon>Echinidea</taxon>
        <taxon>Echinidae</taxon>
        <taxon>Paracentrotus</taxon>
    </lineage>
</organism>